<comment type="function">
    <text evidence="1">Heme chaperone required for the biogenesis of c-type cytochromes. Transiently binds heme delivered by CcmC and transfers the heme to apo-cytochromes in a process facilitated by CcmF and CcmH.</text>
</comment>
<comment type="subcellular location">
    <subcellularLocation>
        <location evidence="1">Cell inner membrane</location>
        <topology evidence="1">Single-pass type II membrane protein</topology>
        <orientation evidence="1">Periplasmic side</orientation>
    </subcellularLocation>
</comment>
<comment type="similarity">
    <text evidence="1">Belongs to the CcmE/CycJ family.</text>
</comment>
<sequence>MNARRKKRLALATALIGGVAAIASLLLYALNSNLNLFYTPTEIVHGKKDTGVKPEIGQRIRVGGMVTVGSLVRDPESLHVEFAVHDAAGGEVMVTYDDLLPDLFREGQGIVAQGVLIEGGKLEATEVLAKHDENYMPPEVAEAMGQTHEKLEYDSTQKTGY</sequence>
<gene>
    <name evidence="1" type="primary">ccmE</name>
    <name evidence="1" type="synonym">cycJ</name>
    <name type="ordered locus">Shew_0186</name>
</gene>
<reference key="1">
    <citation type="submission" date="2007-03" db="EMBL/GenBank/DDBJ databases">
        <title>Complete sequence of Shewanella loihica PV-4.</title>
        <authorList>
            <consortium name="US DOE Joint Genome Institute"/>
            <person name="Copeland A."/>
            <person name="Lucas S."/>
            <person name="Lapidus A."/>
            <person name="Barry K."/>
            <person name="Detter J.C."/>
            <person name="Glavina del Rio T."/>
            <person name="Hammon N."/>
            <person name="Israni S."/>
            <person name="Dalin E."/>
            <person name="Tice H."/>
            <person name="Pitluck S."/>
            <person name="Chain P."/>
            <person name="Malfatti S."/>
            <person name="Shin M."/>
            <person name="Vergez L."/>
            <person name="Schmutz J."/>
            <person name="Larimer F."/>
            <person name="Land M."/>
            <person name="Hauser L."/>
            <person name="Kyrpides N."/>
            <person name="Mikhailova N."/>
            <person name="Romine M.F."/>
            <person name="Serres G."/>
            <person name="Fredrickson J."/>
            <person name="Tiedje J."/>
            <person name="Richardson P."/>
        </authorList>
    </citation>
    <scope>NUCLEOTIDE SEQUENCE [LARGE SCALE GENOMIC DNA]</scope>
    <source>
        <strain>ATCC BAA-1088 / PV-4</strain>
    </source>
</reference>
<name>CCME_SHELP</name>
<feature type="chain" id="PRO_1000070856" description="Cytochrome c-type biogenesis protein CcmE">
    <location>
        <begin position="1"/>
        <end position="161"/>
    </location>
</feature>
<feature type="topological domain" description="Cytoplasmic" evidence="1">
    <location>
        <begin position="1"/>
        <end position="8"/>
    </location>
</feature>
<feature type="transmembrane region" description="Helical; Signal-anchor for type II membrane protein" evidence="1">
    <location>
        <begin position="9"/>
        <end position="29"/>
    </location>
</feature>
<feature type="topological domain" description="Periplasmic" evidence="1">
    <location>
        <begin position="30"/>
        <end position="161"/>
    </location>
</feature>
<feature type="binding site" description="covalent" evidence="1">
    <location>
        <position position="131"/>
    </location>
    <ligand>
        <name>heme</name>
        <dbReference type="ChEBI" id="CHEBI:30413"/>
    </ligand>
</feature>
<feature type="binding site" description="axial binding residue" evidence="1">
    <location>
        <position position="135"/>
    </location>
    <ligand>
        <name>heme</name>
        <dbReference type="ChEBI" id="CHEBI:30413"/>
    </ligand>
    <ligandPart>
        <name>Fe</name>
        <dbReference type="ChEBI" id="CHEBI:18248"/>
    </ligandPart>
</feature>
<organism>
    <name type="scientific">Shewanella loihica (strain ATCC BAA-1088 / PV-4)</name>
    <dbReference type="NCBI Taxonomy" id="323850"/>
    <lineage>
        <taxon>Bacteria</taxon>
        <taxon>Pseudomonadati</taxon>
        <taxon>Pseudomonadota</taxon>
        <taxon>Gammaproteobacteria</taxon>
        <taxon>Alteromonadales</taxon>
        <taxon>Shewanellaceae</taxon>
        <taxon>Shewanella</taxon>
    </lineage>
</organism>
<accession>A3Q9B0</accession>
<protein>
    <recommendedName>
        <fullName evidence="1">Cytochrome c-type biogenesis protein CcmE</fullName>
    </recommendedName>
    <alternativeName>
        <fullName evidence="1">Cytochrome c maturation protein E</fullName>
    </alternativeName>
    <alternativeName>
        <fullName evidence="1">Heme chaperone CcmE</fullName>
    </alternativeName>
</protein>
<keyword id="KW-0997">Cell inner membrane</keyword>
<keyword id="KW-1003">Cell membrane</keyword>
<keyword id="KW-0201">Cytochrome c-type biogenesis</keyword>
<keyword id="KW-0349">Heme</keyword>
<keyword id="KW-0408">Iron</keyword>
<keyword id="KW-0472">Membrane</keyword>
<keyword id="KW-0479">Metal-binding</keyword>
<keyword id="KW-1185">Reference proteome</keyword>
<keyword id="KW-0735">Signal-anchor</keyword>
<keyword id="KW-0812">Transmembrane</keyword>
<keyword id="KW-1133">Transmembrane helix</keyword>
<proteinExistence type="inferred from homology"/>
<evidence type="ECO:0000255" key="1">
    <source>
        <dbReference type="HAMAP-Rule" id="MF_01959"/>
    </source>
</evidence>
<dbReference type="EMBL" id="CP000606">
    <property type="protein sequence ID" value="ABO22058.1"/>
    <property type="molecule type" value="Genomic_DNA"/>
</dbReference>
<dbReference type="RefSeq" id="WP_011863993.1">
    <property type="nucleotide sequence ID" value="NC_009092.1"/>
</dbReference>
<dbReference type="SMR" id="A3Q9B0"/>
<dbReference type="STRING" id="323850.Shew_0186"/>
<dbReference type="KEGG" id="slo:Shew_0186"/>
<dbReference type="eggNOG" id="COG2332">
    <property type="taxonomic scope" value="Bacteria"/>
</dbReference>
<dbReference type="HOGENOM" id="CLU_079503_1_0_6"/>
<dbReference type="OrthoDB" id="9793584at2"/>
<dbReference type="Proteomes" id="UP000001558">
    <property type="component" value="Chromosome"/>
</dbReference>
<dbReference type="GO" id="GO:0005886">
    <property type="term" value="C:plasma membrane"/>
    <property type="evidence" value="ECO:0007669"/>
    <property type="project" value="UniProtKB-SubCell"/>
</dbReference>
<dbReference type="GO" id="GO:0020037">
    <property type="term" value="F:heme binding"/>
    <property type="evidence" value="ECO:0007669"/>
    <property type="project" value="InterPro"/>
</dbReference>
<dbReference type="GO" id="GO:0046872">
    <property type="term" value="F:metal ion binding"/>
    <property type="evidence" value="ECO:0007669"/>
    <property type="project" value="UniProtKB-KW"/>
</dbReference>
<dbReference type="GO" id="GO:0017004">
    <property type="term" value="P:cytochrome complex assembly"/>
    <property type="evidence" value="ECO:0007669"/>
    <property type="project" value="UniProtKB-KW"/>
</dbReference>
<dbReference type="FunFam" id="2.40.50.140:FF:000104">
    <property type="entry name" value="Cytochrome c-type biogenesis protein CcmE"/>
    <property type="match status" value="1"/>
</dbReference>
<dbReference type="Gene3D" id="2.40.50.140">
    <property type="entry name" value="Nucleic acid-binding proteins"/>
    <property type="match status" value="1"/>
</dbReference>
<dbReference type="HAMAP" id="MF_01959">
    <property type="entry name" value="CcmE"/>
    <property type="match status" value="1"/>
</dbReference>
<dbReference type="InterPro" id="IPR004329">
    <property type="entry name" value="CcmE"/>
</dbReference>
<dbReference type="InterPro" id="IPR036127">
    <property type="entry name" value="CcmE-like_sf"/>
</dbReference>
<dbReference type="InterPro" id="IPR012340">
    <property type="entry name" value="NA-bd_OB-fold"/>
</dbReference>
<dbReference type="NCBIfam" id="NF009638">
    <property type="entry name" value="PRK13165.1"/>
    <property type="match status" value="1"/>
</dbReference>
<dbReference type="NCBIfam" id="NF009729">
    <property type="entry name" value="PRK13254.1-3"/>
    <property type="match status" value="1"/>
</dbReference>
<dbReference type="PANTHER" id="PTHR34128">
    <property type="entry name" value="CYTOCHROME C-TYPE BIOGENESIS PROTEIN CCME HOMOLOG, MITOCHONDRIAL"/>
    <property type="match status" value="1"/>
</dbReference>
<dbReference type="PANTHER" id="PTHR34128:SF2">
    <property type="entry name" value="CYTOCHROME C-TYPE BIOGENESIS PROTEIN CCME HOMOLOG, MITOCHONDRIAL"/>
    <property type="match status" value="1"/>
</dbReference>
<dbReference type="Pfam" id="PF03100">
    <property type="entry name" value="CcmE"/>
    <property type="match status" value="1"/>
</dbReference>
<dbReference type="SUPFAM" id="SSF82093">
    <property type="entry name" value="Heme chaperone CcmE"/>
    <property type="match status" value="1"/>
</dbReference>